<dbReference type="EMBL" id="D67015">
    <property type="protein sequence ID" value="BAA11034.1"/>
    <property type="molecule type" value="mRNA"/>
</dbReference>
<dbReference type="EMBL" id="D45836">
    <property type="protein sequence ID" value="BAA08273.1"/>
    <property type="molecule type" value="mRNA"/>
</dbReference>
<dbReference type="EMBL" id="AL627445">
    <property type="status" value="NOT_ANNOTATED_CDS"/>
    <property type="molecule type" value="Genomic_DNA"/>
</dbReference>
<dbReference type="EMBL" id="CH466556">
    <property type="protein sequence ID" value="EDL16074.1"/>
    <property type="molecule type" value="Genomic_DNA"/>
</dbReference>
<dbReference type="EMBL" id="BC052438">
    <property type="protein sequence ID" value="AAH52438.1"/>
    <property type="molecule type" value="mRNA"/>
</dbReference>
<dbReference type="EMBL" id="BC055115">
    <property type="protein sequence ID" value="AAH55115.1"/>
    <property type="molecule type" value="mRNA"/>
</dbReference>
<dbReference type="CCDS" id="CCDS25316.1"/>
<dbReference type="PIR" id="S66288">
    <property type="entry name" value="S66288"/>
</dbReference>
<dbReference type="RefSeq" id="NP_032405.3">
    <property type="nucleotide sequence ID" value="NM_008379.3"/>
</dbReference>
<dbReference type="PDB" id="1GCJ">
    <property type="method" value="X-ray"/>
    <property type="resolution" value="2.60 A"/>
    <property type="chains" value="A/B=1-449"/>
</dbReference>
<dbReference type="PDB" id="1UKL">
    <property type="method" value="X-ray"/>
    <property type="resolution" value="3.00 A"/>
    <property type="chains" value="A/B=1-876"/>
</dbReference>
<dbReference type="PDBsum" id="1GCJ"/>
<dbReference type="PDBsum" id="1UKL"/>
<dbReference type="SMR" id="P70168"/>
<dbReference type="BioGRID" id="200654">
    <property type="interactions" value="39"/>
</dbReference>
<dbReference type="ComplexPortal" id="CPX-1054">
    <property type="entry name" value="Importin complex, KPNA2 variant"/>
</dbReference>
<dbReference type="ComplexPortal" id="CPX-1056">
    <property type="entry name" value="Importin complex, KPNA1 variant"/>
</dbReference>
<dbReference type="ComplexPortal" id="CPX-1058">
    <property type="entry name" value="Importin complex, KPNA3 variant"/>
</dbReference>
<dbReference type="ComplexPortal" id="CPX-1061">
    <property type="entry name" value="Importin complex, KPNA4 variant"/>
</dbReference>
<dbReference type="ComplexPortal" id="CPX-1065">
    <property type="entry name" value="Importin complex, KPNA6 variant"/>
</dbReference>
<dbReference type="ComplexPortal" id="CPX-1067">
    <property type="entry name" value="Importin complex, KPNA7 variant"/>
</dbReference>
<dbReference type="ComplexPortal" id="CPX-1111">
    <property type="entry name" value="Importin complex, Snurportin variant"/>
</dbReference>
<dbReference type="CORUM" id="P70168"/>
<dbReference type="DIP" id="DIP-33404N"/>
<dbReference type="FunCoup" id="P70168">
    <property type="interactions" value="4213"/>
</dbReference>
<dbReference type="IntAct" id="P70168">
    <property type="interactions" value="26"/>
</dbReference>
<dbReference type="MINT" id="P70168"/>
<dbReference type="STRING" id="10090.ENSMUSP00000001479"/>
<dbReference type="GlyGen" id="P70168">
    <property type="glycosylation" value="1 site, 1 O-linked glycan (1 site)"/>
</dbReference>
<dbReference type="iPTMnet" id="P70168"/>
<dbReference type="MetOSite" id="P70168"/>
<dbReference type="PhosphoSitePlus" id="P70168"/>
<dbReference type="SwissPalm" id="P70168"/>
<dbReference type="jPOST" id="P70168"/>
<dbReference type="PaxDb" id="10090-ENSMUSP00000001479"/>
<dbReference type="PeptideAtlas" id="P70168"/>
<dbReference type="ProteomicsDB" id="267130"/>
<dbReference type="Pumba" id="P70168"/>
<dbReference type="Antibodypedia" id="17751">
    <property type="antibodies" value="300 antibodies from 40 providers"/>
</dbReference>
<dbReference type="DNASU" id="16211"/>
<dbReference type="Ensembl" id="ENSMUST00000001479.5">
    <property type="protein sequence ID" value="ENSMUSP00000001479.4"/>
    <property type="gene ID" value="ENSMUSG00000001440.6"/>
</dbReference>
<dbReference type="GeneID" id="16211"/>
<dbReference type="KEGG" id="mmu:16211"/>
<dbReference type="UCSC" id="uc007ldu.1">
    <property type="organism name" value="mouse"/>
</dbReference>
<dbReference type="AGR" id="MGI:107532"/>
<dbReference type="CTD" id="3837"/>
<dbReference type="MGI" id="MGI:107532">
    <property type="gene designation" value="Kpnb1"/>
</dbReference>
<dbReference type="VEuPathDB" id="HostDB:ENSMUSG00000001440"/>
<dbReference type="eggNOG" id="KOG1241">
    <property type="taxonomic scope" value="Eukaryota"/>
</dbReference>
<dbReference type="GeneTree" id="ENSGT00550000074898"/>
<dbReference type="HOGENOM" id="CLU_008296_1_0_1"/>
<dbReference type="InParanoid" id="P70168"/>
<dbReference type="OMA" id="QQYQERW"/>
<dbReference type="OrthoDB" id="10263328at2759"/>
<dbReference type="PhylomeDB" id="P70168"/>
<dbReference type="TreeFam" id="TF105655"/>
<dbReference type="Reactome" id="R-HSA-9828806">
    <property type="pathway name" value="Maturation of hRSV A proteins"/>
</dbReference>
<dbReference type="Reactome" id="R-MMU-140342">
    <property type="pathway name" value="Apoptosis induced DNA fragmentation"/>
</dbReference>
<dbReference type="Reactome" id="R-MMU-1655829">
    <property type="pathway name" value="Regulation of cholesterol biosynthesis by SREBP (SREBF)"/>
</dbReference>
<dbReference type="Reactome" id="R-MMU-2995383">
    <property type="pathway name" value="Initiation of Nuclear Envelope (NE) Reformation"/>
</dbReference>
<dbReference type="Reactome" id="R-MMU-6798695">
    <property type="pathway name" value="Neutrophil degranulation"/>
</dbReference>
<dbReference type="Reactome" id="R-MMU-68616">
    <property type="pathway name" value="Assembly of the ORC complex at the origin of replication"/>
</dbReference>
<dbReference type="Reactome" id="R-MMU-909733">
    <property type="pathway name" value="Interferon alpha/beta signaling"/>
</dbReference>
<dbReference type="BioGRID-ORCS" id="16211">
    <property type="hits" value="28 hits in 76 CRISPR screens"/>
</dbReference>
<dbReference type="CD-CODE" id="CE726F99">
    <property type="entry name" value="Postsynaptic density"/>
</dbReference>
<dbReference type="ChiTaRS" id="Kpnb1">
    <property type="organism name" value="mouse"/>
</dbReference>
<dbReference type="EvolutionaryTrace" id="P70168"/>
<dbReference type="PRO" id="PR:P70168"/>
<dbReference type="Proteomes" id="UP000000589">
    <property type="component" value="Chromosome 11"/>
</dbReference>
<dbReference type="RNAct" id="P70168">
    <property type="molecule type" value="protein"/>
</dbReference>
<dbReference type="Bgee" id="ENSMUSG00000001440">
    <property type="expression patterns" value="Expressed in optic fissure and 274 other cell types or tissues"/>
</dbReference>
<dbReference type="GO" id="GO:0010494">
    <property type="term" value="C:cytoplasmic stress granule"/>
    <property type="evidence" value="ECO:0000314"/>
    <property type="project" value="ARUK-UCL"/>
</dbReference>
<dbReference type="GO" id="GO:0005829">
    <property type="term" value="C:cytosol"/>
    <property type="evidence" value="ECO:0000303"/>
    <property type="project" value="ComplexPortal"/>
</dbReference>
<dbReference type="GO" id="GO:0071782">
    <property type="term" value="C:endoplasmic reticulum tubular network"/>
    <property type="evidence" value="ECO:0007669"/>
    <property type="project" value="Ensembl"/>
</dbReference>
<dbReference type="GO" id="GO:0042564">
    <property type="term" value="C:NLS-dependent protein nuclear import complex"/>
    <property type="evidence" value="ECO:0000266"/>
    <property type="project" value="ComplexPortal"/>
</dbReference>
<dbReference type="GO" id="GO:0031965">
    <property type="term" value="C:nuclear membrane"/>
    <property type="evidence" value="ECO:0007669"/>
    <property type="project" value="Ensembl"/>
</dbReference>
<dbReference type="GO" id="GO:0005654">
    <property type="term" value="C:nucleoplasm"/>
    <property type="evidence" value="ECO:0000266"/>
    <property type="project" value="ComplexPortal"/>
</dbReference>
<dbReference type="GO" id="GO:0032991">
    <property type="term" value="C:protein-containing complex"/>
    <property type="evidence" value="ECO:0000314"/>
    <property type="project" value="MGI"/>
</dbReference>
<dbReference type="GO" id="GO:0051879">
    <property type="term" value="F:Hsp90 protein binding"/>
    <property type="evidence" value="ECO:0000314"/>
    <property type="project" value="MGI"/>
</dbReference>
<dbReference type="GO" id="GO:0061676">
    <property type="term" value="F:importin-alpha family protein binding"/>
    <property type="evidence" value="ECO:0000353"/>
    <property type="project" value="MGI"/>
</dbReference>
<dbReference type="GO" id="GO:0061608">
    <property type="term" value="F:nuclear import signal receptor activity"/>
    <property type="evidence" value="ECO:0000314"/>
    <property type="project" value="MGI"/>
</dbReference>
<dbReference type="GO" id="GO:0019904">
    <property type="term" value="F:protein domain specific binding"/>
    <property type="evidence" value="ECO:0007669"/>
    <property type="project" value="Ensembl"/>
</dbReference>
<dbReference type="GO" id="GO:0031267">
    <property type="term" value="F:small GTPase binding"/>
    <property type="evidence" value="ECO:0007669"/>
    <property type="project" value="InterPro"/>
</dbReference>
<dbReference type="GO" id="GO:0030953">
    <property type="term" value="P:astral microtubule organization"/>
    <property type="evidence" value="ECO:0007669"/>
    <property type="project" value="Ensembl"/>
</dbReference>
<dbReference type="GO" id="GO:0040001">
    <property type="term" value="P:establishment of mitotic spindle localization"/>
    <property type="evidence" value="ECO:0007669"/>
    <property type="project" value="Ensembl"/>
</dbReference>
<dbReference type="GO" id="GO:0007079">
    <property type="term" value="P:mitotic chromosome movement towards spindle pole"/>
    <property type="evidence" value="ECO:0007669"/>
    <property type="project" value="Ensembl"/>
</dbReference>
<dbReference type="GO" id="GO:0007080">
    <property type="term" value="P:mitotic metaphase chromosome alignment"/>
    <property type="evidence" value="ECO:0007669"/>
    <property type="project" value="Ensembl"/>
</dbReference>
<dbReference type="GO" id="GO:0090307">
    <property type="term" value="P:mitotic spindle assembly"/>
    <property type="evidence" value="ECO:0007669"/>
    <property type="project" value="Ensembl"/>
</dbReference>
<dbReference type="GO" id="GO:0006607">
    <property type="term" value="P:NLS-bearing protein import into nucleus"/>
    <property type="evidence" value="ECO:0007669"/>
    <property type="project" value="Ensembl"/>
</dbReference>
<dbReference type="GO" id="GO:0006606">
    <property type="term" value="P:protein import into nucleus"/>
    <property type="evidence" value="ECO:0000314"/>
    <property type="project" value="MGI"/>
</dbReference>
<dbReference type="GO" id="GO:0006610">
    <property type="term" value="P:ribosomal protein import into nucleus"/>
    <property type="evidence" value="ECO:0000314"/>
    <property type="project" value="MGI"/>
</dbReference>
<dbReference type="GO" id="GO:0006404">
    <property type="term" value="P:RNA import into nucleus"/>
    <property type="evidence" value="ECO:0000266"/>
    <property type="project" value="ComplexPortal"/>
</dbReference>
<dbReference type="FunFam" id="1.25.10.10:FF:000027">
    <property type="entry name" value="Importin subunit beta-1"/>
    <property type="match status" value="1"/>
</dbReference>
<dbReference type="Gene3D" id="1.25.10.10">
    <property type="entry name" value="Leucine-rich Repeat Variant"/>
    <property type="match status" value="1"/>
</dbReference>
<dbReference type="IDEAL" id="IID50146"/>
<dbReference type="InterPro" id="IPR011989">
    <property type="entry name" value="ARM-like"/>
</dbReference>
<dbReference type="InterPro" id="IPR016024">
    <property type="entry name" value="ARM-type_fold"/>
</dbReference>
<dbReference type="InterPro" id="IPR000225">
    <property type="entry name" value="Armadillo"/>
</dbReference>
<dbReference type="InterPro" id="IPR021133">
    <property type="entry name" value="HEAT_type_2"/>
</dbReference>
<dbReference type="InterPro" id="IPR001494">
    <property type="entry name" value="Importin-beta_N"/>
</dbReference>
<dbReference type="InterPro" id="IPR040122">
    <property type="entry name" value="Importin_beta"/>
</dbReference>
<dbReference type="PANTHER" id="PTHR10527">
    <property type="entry name" value="IMPORTIN BETA"/>
    <property type="match status" value="1"/>
</dbReference>
<dbReference type="Pfam" id="PF13513">
    <property type="entry name" value="HEAT_EZ"/>
    <property type="match status" value="1"/>
</dbReference>
<dbReference type="Pfam" id="PF03810">
    <property type="entry name" value="IBN_N"/>
    <property type="match status" value="1"/>
</dbReference>
<dbReference type="SMART" id="SM00185">
    <property type="entry name" value="ARM"/>
    <property type="match status" value="3"/>
</dbReference>
<dbReference type="SMART" id="SM00913">
    <property type="entry name" value="IBN_N"/>
    <property type="match status" value="1"/>
</dbReference>
<dbReference type="SUPFAM" id="SSF48371">
    <property type="entry name" value="ARM repeat"/>
    <property type="match status" value="1"/>
</dbReference>
<dbReference type="PROSITE" id="PS50077">
    <property type="entry name" value="HEAT_REPEAT"/>
    <property type="match status" value="1"/>
</dbReference>
<dbReference type="PROSITE" id="PS50166">
    <property type="entry name" value="IMPORTIN_B_NT"/>
    <property type="match status" value="1"/>
</dbReference>
<reference key="1">
    <citation type="journal article" date="1996" name="Genomics">
        <title>Localization of the importin-beta gene to mouse chromosome 11D and rat chromosome 10q32.1.</title>
        <authorList>
            <person name="Matsuda Y."/>
            <person name="Hamatani K."/>
            <person name="Itoh M."/>
            <person name="Takahashi E."/>
            <person name="Araki R."/>
            <person name="Abe M."/>
        </authorList>
    </citation>
    <scope>NUCLEOTIDE SEQUENCE [MRNA]</scope>
    <source>
        <tissue>Lung</tissue>
    </source>
</reference>
<reference key="2">
    <citation type="journal article" date="1995" name="FEBS Lett.">
        <title>The nuclear pore-targeting complex binds to nuclear pores after association with a karyophile.</title>
        <authorList>
            <person name="Imamoto N."/>
            <person name="Shimamoto T."/>
            <person name="Kose S."/>
            <person name="Takao T."/>
            <person name="Tachibana T."/>
            <person name="Matsubae M."/>
            <person name="Sekimoto T."/>
            <person name="Shimonishi Y."/>
            <person name="Yoneda Y."/>
        </authorList>
    </citation>
    <scope>NUCLEOTIDE SEQUENCE [MRNA]</scope>
    <scope>PROTEIN SEQUENCE OF 74-92; 212-221; 377-389 AND 860-867</scope>
    <source>
        <strain>C57BL/6J</strain>
        <tissue>Thymus</tissue>
    </source>
</reference>
<reference key="3">
    <citation type="journal article" date="2009" name="PLoS Biol.">
        <title>Lineage-specific biology revealed by a finished genome assembly of the mouse.</title>
        <authorList>
            <person name="Church D.M."/>
            <person name="Goodstadt L."/>
            <person name="Hillier L.W."/>
            <person name="Zody M.C."/>
            <person name="Goldstein S."/>
            <person name="She X."/>
            <person name="Bult C.J."/>
            <person name="Agarwala R."/>
            <person name="Cherry J.L."/>
            <person name="DiCuccio M."/>
            <person name="Hlavina W."/>
            <person name="Kapustin Y."/>
            <person name="Meric P."/>
            <person name="Maglott D."/>
            <person name="Birtle Z."/>
            <person name="Marques A.C."/>
            <person name="Graves T."/>
            <person name="Zhou S."/>
            <person name="Teague B."/>
            <person name="Potamousis K."/>
            <person name="Churas C."/>
            <person name="Place M."/>
            <person name="Herschleb J."/>
            <person name="Runnheim R."/>
            <person name="Forrest D."/>
            <person name="Amos-Landgraf J."/>
            <person name="Schwartz D.C."/>
            <person name="Cheng Z."/>
            <person name="Lindblad-Toh K."/>
            <person name="Eichler E.E."/>
            <person name="Ponting C.P."/>
        </authorList>
    </citation>
    <scope>NUCLEOTIDE SEQUENCE [LARGE SCALE GENOMIC DNA]</scope>
    <source>
        <strain>C57BL/6J</strain>
    </source>
</reference>
<reference key="4">
    <citation type="submission" date="2005-07" db="EMBL/GenBank/DDBJ databases">
        <authorList>
            <person name="Mural R.J."/>
            <person name="Adams M.D."/>
            <person name="Myers E.W."/>
            <person name="Smith H.O."/>
            <person name="Venter J.C."/>
        </authorList>
    </citation>
    <scope>NUCLEOTIDE SEQUENCE [LARGE SCALE GENOMIC DNA]</scope>
</reference>
<reference key="5">
    <citation type="journal article" date="2004" name="Genome Res.">
        <title>The status, quality, and expansion of the NIH full-length cDNA project: the Mammalian Gene Collection (MGC).</title>
        <authorList>
            <consortium name="The MGC Project Team"/>
        </authorList>
    </citation>
    <scope>NUCLEOTIDE SEQUENCE [LARGE SCALE MRNA]</scope>
    <source>
        <strain>C57BL/6J</strain>
        <tissue>Brain</tissue>
        <tissue>Limb</tissue>
    </source>
</reference>
<reference key="6">
    <citation type="journal article" date="2001" name="EMBO Rep.">
        <title>Multiple pathways contribute to nuclear import of core histones.</title>
        <authorList>
            <person name="Muehlhaeusser P."/>
            <person name="Mueller E.-C."/>
            <person name="Otto A."/>
            <person name="Kutay U."/>
        </authorList>
    </citation>
    <scope>FUNCTION</scope>
    <scope>INTERACTION WITH HISTONES H2B; H2A; H3 AND H4</scope>
</reference>
<reference key="7">
    <citation type="journal article" date="2001" name="J. Biol. Chem.">
        <title>The C-terminal nuclear localization signal of the sex-determining region Y (SRY) high mobility group domain mediates nuclear import through importin beta 1.</title>
        <authorList>
            <person name="Forwood J.K."/>
            <person name="Harley V."/>
            <person name="Jans D.A."/>
        </authorList>
    </citation>
    <scope>INTERACTION WITH SRY</scope>
</reference>
<reference key="8">
    <citation type="journal article" date="2006" name="Mol. Cell. Proteomics">
        <title>Comprehensive identification of phosphorylation sites in postsynaptic density preparations.</title>
        <authorList>
            <person name="Trinidad J.C."/>
            <person name="Specht C.G."/>
            <person name="Thalhammer A."/>
            <person name="Schoepfer R."/>
            <person name="Burlingame A.L."/>
        </authorList>
    </citation>
    <scope>IDENTIFICATION BY MASS SPECTROMETRY [LARGE SCALE ANALYSIS]</scope>
    <source>
        <tissue>Brain</tissue>
    </source>
</reference>
<reference key="9">
    <citation type="journal article" date="2010" name="Cell">
        <title>A tissue-specific atlas of mouse protein phosphorylation and expression.</title>
        <authorList>
            <person name="Huttlin E.L."/>
            <person name="Jedrychowski M.P."/>
            <person name="Elias J.E."/>
            <person name="Goswami T."/>
            <person name="Rad R."/>
            <person name="Beausoleil S.A."/>
            <person name="Villen J."/>
            <person name="Haas W."/>
            <person name="Sowa M.E."/>
            <person name="Gygi S.P."/>
        </authorList>
    </citation>
    <scope>IDENTIFICATION BY MASS SPECTROMETRY [LARGE SCALE ANALYSIS]</scope>
    <source>
        <tissue>Brain</tissue>
        <tissue>Brown adipose tissue</tissue>
        <tissue>Heart</tissue>
        <tissue>Kidney</tissue>
        <tissue>Liver</tissue>
        <tissue>Lung</tissue>
        <tissue>Pancreas</tissue>
        <tissue>Spleen</tissue>
        <tissue>Testis</tissue>
    </source>
</reference>
<reference key="10">
    <citation type="journal article" date="2010" name="J. Biol. Chem.">
        <title>Novel importin-alpha family member Kpna7 is required for normal fertility and fecundity in the mouse.</title>
        <authorList>
            <person name="Hu J."/>
            <person name="Wang F."/>
            <person name="Yuan Y."/>
            <person name="Zhu X."/>
            <person name="Wang Y."/>
            <person name="Zhang Y."/>
            <person name="Kou Z."/>
            <person name="Wang S."/>
            <person name="Gao S."/>
        </authorList>
    </citation>
    <scope>INTERACTION WITH KPNA7</scope>
    <source>
        <strain>C57BL/6J</strain>
        <tissue>Ovary</tissue>
    </source>
</reference>
<reference key="11">
    <citation type="journal article" date="2015" name="PLoS ONE">
        <title>The inner nuclear membrane protein Nemp1 is a new type of RanGTP-binding protein in eukaryotes.</title>
        <authorList>
            <person name="Shibano T."/>
            <person name="Mamada H."/>
            <person name="Hakuno F."/>
            <person name="Takahashi S."/>
            <person name="Taira M."/>
        </authorList>
    </citation>
    <scope>INTERACTION WITH RAN</scope>
</reference>
<reference key="12">
    <citation type="journal article" date="2000" name="J. Mol. Biol.">
        <title>The adoption of a twisted structure of importin-beta is essential for the protein-protein interaction required for nuclear transport.</title>
        <authorList>
            <person name="Lee S.J."/>
            <person name="Imamoto N."/>
            <person name="Sakai H."/>
            <person name="Nakagawa A."/>
            <person name="Kose S."/>
            <person name="Koike M."/>
            <person name="Yamamoto M."/>
            <person name="Kumasaka T."/>
            <person name="Yoneda Y."/>
            <person name="Tsukihara T."/>
        </authorList>
    </citation>
    <scope>X-RAY CRYSTALLOGRAPHY (2.60 ANGSTROMS) OF 1-449</scope>
    <scope>REPEAT STRUCTURE</scope>
</reference>
<reference key="13">
    <citation type="journal article" date="2003" name="Science">
        <title>The structure of importin-beta bound to SREBP-2: nuclear import of a transcription factor.</title>
        <authorList>
            <person name="Lee S.J."/>
            <person name="Sekimoto T."/>
            <person name="Yamashita E."/>
            <person name="Nagoshi E."/>
            <person name="Nakagawa A."/>
            <person name="Imamoto N."/>
            <person name="Yoshimura M."/>
            <person name="Sakai H."/>
            <person name="Chong K.T."/>
            <person name="Tsukihara T."/>
            <person name="Yoneda Y."/>
        </authorList>
    </citation>
    <scope>X-RAY CRYSTALLOGRAPHY (3.00 ANGSTROMS)</scope>
    <scope>REPEAT STRUCTURE</scope>
</reference>
<sequence length="876" mass="97184">MELITILEKTVSPDRLELEAAQKFLERAAVENLPTFLVELSRVLANPGNSQVARVAAGLQIKNSLTSKDPDIKAQYQQRWLAIDANARREVKNYVLQTLGTETYRPSSASQCVAGIACAEIPVSQWPELIPQLVANVTNPNSTEHMKESTLEAIGYICQDIDPEQLQDKSNEILTAIIQGMRKEEPSNNVKLAATNALLNSLEFTKANFDKESERHFIMQVVCEATQCPDTRVRVAALQNLVKIMSLYYQYMETYMGPALFAITIEAMKSDIDEVALQGIEFWSNVCDEEMDLAIEASEAAEQGRPPEHTSKFYAKGALQYLVPILTQTLTKQDENDDDDDWNPCKAAGVCLMLLSTCCEDDIVPHVLPFIKEHIKNPDWRYRDAAVMAFGSILEGPEPNQLKPLVIQAMPTLIELMKDPSVVVRDTTAWTVGRICELLPEAAINDVYLAPLLQCLIEGLSAEPRVASNVCWAFSSLAEAAYEAADVADDQEEPATYCLSSSFELIVQKLLETTDRPDGHQNNLRSSAYESLMEIVKNSAKDCYPAVQKTTLVIMERLQQVLQMESHIQSTSDRIQFNDLQSLLCATLQNVLRKVQHQDALQISDVVMASLLRMFQSTAGSGGVQEDALMAVSTLVEVLGGEFLKYMEAFKPFLGIGLKNYAEYQVCLAAVGLVGDLCRALQSNILPFCDEVMQLLLENLGNENVHRSVKPQILSVFGDIALAIGGEFKKYLEVVLNTLQQASQAQVDKSDFDMVDYLNELRESCLEAYTGIVQGLKGDQENVHPDVMLVQPRVEFILSFIDHIAGDEDHTDGVVACAAGLIGDLCTAFGKDVLKLVEARPMIHELLTEGRRSKTNKAKTLATWATKELRKLKNQA</sequence>
<comment type="function">
    <text evidence="2 5">Functions in nuclear protein import, either in association with an adapter protein, like an importin-alpha subunit, which binds to nuclear localization signals (NLS) in cargo substrates, or by acting as autonomous nuclear transport receptor (PubMed:11493596). Acting autonomously, serves itself as NLS receptor (By similarity). Docking of the importin/substrate complex to the nuclear pore complex (NPC) is mediated by KPNB1 through binding to nucleoporin FxFG repeats and the complex is subsequently translocated through the pore by an energy requiring, Ran-dependent mechanism (By similarity). At the nucleoplasmic side of the NPC, Ran binds to importin-beta and the three components separate and importin-alpha and -beta are re-exported from the nucleus to the cytoplasm where GTP hydrolysis releases Ran from importin (By similarity). The directionality of nuclear import is thought to be conferred by an asymmetric distribution of the GTP- and GDP-bound forms of Ran between the cytoplasm and nucleus (By similarity). Mediates autonomously the nuclear import of ribosomal proteins RPL23A, RPS7 and RPL5 (By similarity). In association with IPO7, mediates the nuclear import of H1 histone (By similarity). In vitro, mediates nuclear import of H2A, H2B, H3 and H4 histones (PubMed:11493596). Imports MRTFA, SNAI1 and PRKCI into the nucleus (By similarity).</text>
</comment>
<comment type="subunit">
    <text evidence="2 5 6 8 9">Forms a complex with an importin alpha subunit (By similarity). Interacts with XPO1 (By similarity). Forms a heterodimer with IPO7 (By similarity). The KPNB1/IPO7 heterodimer interacts with H1 histone (By similarity). Interacts with SNUPN (By similarity). Interacts with H2A, H2B, H3 and H4 histones (PubMed:11493596). Component of an import snRNP complex composed of KPNB1, SNUPN, SMN1 and ZNF259 (By similarity). Component of a nuclear export receptor complex composed of KPNB1, Ran, SNUPN and XPO1 (By similarity). Interacts with SRY (PubMed:11535586). Interacts with PRKCI/atypical protein kinase C iota (By similarity). Interacts with KPNA2 (By similarity). Interacts with KPNA7 (PubMed:20699224). Interacts with SNAI1 (via zinc fingers) and SNAI2 (via zinc fingers) (By similarity). Interacts with SLC35G1 and STIM1 (By similarity). Interacts with DCAF8 (By similarity). Interacts with RAN (PubMed:25946333). Interacts with NUMA1 (via C-terminus); this interaction is inhibited by RanGTP (By similarity). Interacts with ZBED1/hDREF; required for nuclear import of ZBED1/hDREF (By similarity). Interacts with SRP19 (By similarity). Interacts with RPL23A (via BIB domain), RPS7 and RPL5 (By similarity).</text>
</comment>
<comment type="interaction">
    <interactant intactId="EBI-540580">
        <id>P70168</id>
    </interactant>
    <interactant intactId="EBI-286779">
        <id>P49790</id>
        <label>NUP153</label>
    </interactant>
    <organismsDiffer>true</organismsDiffer>
    <experiments>2</experiments>
</comment>
<comment type="subcellular location">
    <subcellularLocation>
        <location evidence="2">Cytoplasm</location>
    </subcellularLocation>
    <subcellularLocation>
        <location evidence="2">Nucleus envelope</location>
    </subcellularLocation>
</comment>
<comment type="PTM">
    <text evidence="2">Mono-ADP-ribosylated by PARP16.</text>
</comment>
<comment type="similarity">
    <text evidence="10">Belongs to the importin beta family. Importin beta-1 subfamily.</text>
</comment>
<keyword id="KW-0002">3D-structure</keyword>
<keyword id="KW-0007">Acetylation</keyword>
<keyword id="KW-0013">ADP-ribosylation</keyword>
<keyword id="KW-0963">Cytoplasm</keyword>
<keyword id="KW-0903">Direct protein sequencing</keyword>
<keyword id="KW-0539">Nucleus</keyword>
<keyword id="KW-0597">Phosphoprotein</keyword>
<keyword id="KW-0653">Protein transport</keyword>
<keyword id="KW-1185">Reference proteome</keyword>
<keyword id="KW-0677">Repeat</keyword>
<keyword id="KW-0813">Transport</keyword>
<gene>
    <name type="primary">Kpnb1</name>
    <name type="synonym">Impnb</name>
</gene>
<proteinExistence type="evidence at protein level"/>
<organism>
    <name type="scientific">Mus musculus</name>
    <name type="common">Mouse</name>
    <dbReference type="NCBI Taxonomy" id="10090"/>
    <lineage>
        <taxon>Eukaryota</taxon>
        <taxon>Metazoa</taxon>
        <taxon>Chordata</taxon>
        <taxon>Craniata</taxon>
        <taxon>Vertebrata</taxon>
        <taxon>Euteleostomi</taxon>
        <taxon>Mammalia</taxon>
        <taxon>Eutheria</taxon>
        <taxon>Euarchontoglires</taxon>
        <taxon>Glires</taxon>
        <taxon>Rodentia</taxon>
        <taxon>Myomorpha</taxon>
        <taxon>Muroidea</taxon>
        <taxon>Muridae</taxon>
        <taxon>Murinae</taxon>
        <taxon>Mus</taxon>
        <taxon>Mus</taxon>
    </lineage>
</organism>
<feature type="chain" id="PRO_0000120746" description="Importin subunit beta-1">
    <location>
        <begin position="1"/>
        <end position="876"/>
    </location>
</feature>
<feature type="repeat" description="HEAT 1" evidence="4">
    <location>
        <begin position="3"/>
        <end position="29"/>
    </location>
</feature>
<feature type="domain" description="Importin N-terminal" evidence="3">
    <location>
        <begin position="21"/>
        <end position="101"/>
    </location>
</feature>
<feature type="repeat" description="HEAT 2" evidence="4">
    <location>
        <begin position="32"/>
        <end position="62"/>
    </location>
</feature>
<feature type="repeat" description="HEAT 3" evidence="4">
    <location>
        <begin position="85"/>
        <end position="120"/>
    </location>
</feature>
<feature type="repeat" description="HEAT 4" evidence="4">
    <location>
        <begin position="129"/>
        <end position="160"/>
    </location>
</feature>
<feature type="repeat" description="HEAT 5" evidence="4">
    <location>
        <begin position="170"/>
        <end position="201"/>
    </location>
</feature>
<feature type="repeat" description="HEAT 6" evidence="4">
    <location>
        <begin position="212"/>
        <end position="247"/>
    </location>
</feature>
<feature type="repeat" description="HEAT 7" evidence="4">
    <location>
        <begin position="260"/>
        <end position="302"/>
    </location>
</feature>
<feature type="repeat" description="HEAT 8" evidence="4">
    <location>
        <begin position="314"/>
        <end position="359"/>
    </location>
</feature>
<feature type="repeat" description="HEAT 9" evidence="4">
    <location>
        <begin position="363"/>
        <end position="392"/>
    </location>
</feature>
<feature type="repeat" description="HEAT 10" evidence="4">
    <location>
        <begin position="399"/>
        <end position="438"/>
    </location>
</feature>
<feature type="repeat" description="HEAT 11" evidence="7">
    <location>
        <begin position="449"/>
        <end position="485"/>
    </location>
</feature>
<feature type="repeat" description="HEAT 12" evidence="7">
    <location>
        <begin position="500"/>
        <end position="537"/>
    </location>
</feature>
<feature type="repeat" description="HEAT 13" evidence="7">
    <location>
        <begin position="544"/>
        <end position="592"/>
    </location>
</feature>
<feature type="repeat" description="HEAT 14" evidence="7">
    <location>
        <begin position="597"/>
        <end position="639"/>
    </location>
</feature>
<feature type="repeat" description="HEAT 15" evidence="7">
    <location>
        <begin position="644"/>
        <end position="680"/>
    </location>
</feature>
<feature type="repeat" description="HEAT 16" evidence="7">
    <location>
        <begin position="686"/>
        <end position="724"/>
    </location>
</feature>
<feature type="repeat" description="HEAT 17" evidence="7">
    <location>
        <begin position="729"/>
        <end position="777"/>
    </location>
</feature>
<feature type="repeat" description="HEAT 18" evidence="7">
    <location>
        <begin position="785"/>
        <end position="828"/>
    </location>
</feature>
<feature type="repeat" description="HEAT 19" evidence="7">
    <location>
        <begin position="834"/>
        <end position="875"/>
    </location>
</feature>
<feature type="region of interest" description="Essential for high affinity interaction with RPL23A" evidence="2">
    <location>
        <begin position="286"/>
        <end position="462"/>
    </location>
</feature>
<feature type="region of interest" description="IAB-binding">
    <location>
        <begin position="329"/>
        <end position="342"/>
    </location>
</feature>
<feature type="region of interest" description="Ran-GTP binding" evidence="1">
    <location>
        <begin position="334"/>
        <end position="419"/>
    </location>
</feature>
<feature type="modified residue" description="N-acetylmethionine" evidence="2">
    <location>
        <position position="1"/>
    </location>
</feature>
<feature type="modified residue" description="Phosphoserine" evidence="2">
    <location>
        <position position="12"/>
    </location>
</feature>
<feature type="modified residue" description="N6-acetyllysine" evidence="2">
    <location>
        <position position="211"/>
    </location>
</feature>
<feature type="modified residue" description="N6-acetyllysine" evidence="2">
    <location>
        <position position="835"/>
    </location>
</feature>
<feature type="modified residue" description="N6-acetyllysine" evidence="2">
    <location>
        <position position="867"/>
    </location>
</feature>
<feature type="sequence conflict" description="In Ref. 1; BAA11034." evidence="10" ref="1">
    <original>M</original>
    <variation>V</variation>
    <location>
        <position position="388"/>
    </location>
</feature>
<feature type="helix" evidence="11">
    <location>
        <begin position="1"/>
        <end position="7"/>
    </location>
</feature>
<feature type="turn" evidence="11">
    <location>
        <begin position="8"/>
        <end position="11"/>
    </location>
</feature>
<feature type="helix" evidence="11">
    <location>
        <begin position="15"/>
        <end position="45"/>
    </location>
</feature>
<feature type="strand" evidence="12">
    <location>
        <begin position="47"/>
        <end position="49"/>
    </location>
</feature>
<feature type="helix" evidence="11">
    <location>
        <begin position="51"/>
        <end position="62"/>
    </location>
</feature>
<feature type="turn" evidence="11">
    <location>
        <begin position="63"/>
        <end position="65"/>
    </location>
</feature>
<feature type="helix" evidence="11">
    <location>
        <begin position="70"/>
        <end position="82"/>
    </location>
</feature>
<feature type="helix" evidence="11">
    <location>
        <begin position="85"/>
        <end position="98"/>
    </location>
</feature>
<feature type="strand" evidence="11">
    <location>
        <begin position="104"/>
        <end position="106"/>
    </location>
</feature>
<feature type="helix" evidence="11">
    <location>
        <begin position="108"/>
        <end position="120"/>
    </location>
</feature>
<feature type="helix" evidence="11">
    <location>
        <begin position="121"/>
        <end position="123"/>
    </location>
</feature>
<feature type="helix" evidence="11">
    <location>
        <begin position="129"/>
        <end position="138"/>
    </location>
</feature>
<feature type="helix" evidence="11">
    <location>
        <begin position="144"/>
        <end position="160"/>
    </location>
</feature>
<feature type="helix" evidence="11">
    <location>
        <begin position="163"/>
        <end position="166"/>
    </location>
</feature>
<feature type="helix" evidence="11">
    <location>
        <begin position="167"/>
        <end position="169"/>
    </location>
</feature>
<feature type="helix" evidence="11">
    <location>
        <begin position="170"/>
        <end position="181"/>
    </location>
</feature>
<feature type="helix" evidence="11">
    <location>
        <begin position="188"/>
        <end position="201"/>
    </location>
</feature>
<feature type="turn" evidence="11">
    <location>
        <begin position="202"/>
        <end position="204"/>
    </location>
</feature>
<feature type="helix" evidence="11">
    <location>
        <begin position="206"/>
        <end position="209"/>
    </location>
</feature>
<feature type="helix" evidence="11">
    <location>
        <begin position="212"/>
        <end position="225"/>
    </location>
</feature>
<feature type="helix" evidence="11">
    <location>
        <begin position="231"/>
        <end position="247"/>
    </location>
</feature>
<feature type="helix" evidence="11">
    <location>
        <begin position="249"/>
        <end position="254"/>
    </location>
</feature>
<feature type="turn" evidence="11">
    <location>
        <begin position="255"/>
        <end position="259"/>
    </location>
</feature>
<feature type="helix" evidence="11">
    <location>
        <begin position="260"/>
        <end position="268"/>
    </location>
</feature>
<feature type="helix" evidence="11">
    <location>
        <begin position="273"/>
        <end position="302"/>
    </location>
</feature>
<feature type="helix" evidence="11">
    <location>
        <begin position="314"/>
        <end position="329"/>
    </location>
</feature>
<feature type="helix" evidence="11">
    <location>
        <begin position="330"/>
        <end position="332"/>
    </location>
</feature>
<feature type="strand" evidence="11">
    <location>
        <begin position="338"/>
        <end position="340"/>
    </location>
</feature>
<feature type="helix" evidence="11">
    <location>
        <begin position="344"/>
        <end position="359"/>
    </location>
</feature>
<feature type="helix" evidence="11">
    <location>
        <begin position="360"/>
        <end position="362"/>
    </location>
</feature>
<feature type="helix" evidence="11">
    <location>
        <begin position="363"/>
        <end position="374"/>
    </location>
</feature>
<feature type="helix" evidence="11">
    <location>
        <begin position="380"/>
        <end position="392"/>
    </location>
</feature>
<feature type="strand" evidence="11">
    <location>
        <begin position="394"/>
        <end position="397"/>
    </location>
</feature>
<feature type="helix" evidence="11">
    <location>
        <begin position="399"/>
        <end position="416"/>
    </location>
</feature>
<feature type="helix" evidence="11">
    <location>
        <begin position="422"/>
        <end position="438"/>
    </location>
</feature>
<feature type="helix" evidence="11">
    <location>
        <begin position="440"/>
        <end position="444"/>
    </location>
</feature>
<feature type="strand" evidence="11">
    <location>
        <begin position="447"/>
        <end position="449"/>
    </location>
</feature>
<feature type="helix" evidence="12">
    <location>
        <begin position="464"/>
        <end position="485"/>
    </location>
</feature>
<feature type="helix" evidence="12">
    <location>
        <begin position="486"/>
        <end position="488"/>
    </location>
</feature>
<feature type="strand" evidence="12">
    <location>
        <begin position="491"/>
        <end position="495"/>
    </location>
</feature>
<feature type="helix" evidence="12">
    <location>
        <begin position="500"/>
        <end position="514"/>
    </location>
</feature>
<feature type="turn" evidence="12">
    <location>
        <begin position="517"/>
        <end position="520"/>
    </location>
</feature>
<feature type="helix" evidence="12">
    <location>
        <begin position="521"/>
        <end position="523"/>
    </location>
</feature>
<feature type="helix" evidence="12">
    <location>
        <begin position="524"/>
        <end position="537"/>
    </location>
</feature>
<feature type="helix" evidence="12">
    <location>
        <begin position="544"/>
        <end position="563"/>
    </location>
</feature>
<feature type="helix" evidence="12">
    <location>
        <begin position="564"/>
        <end position="567"/>
    </location>
</feature>
<feature type="helix" evidence="12">
    <location>
        <begin position="571"/>
        <end position="592"/>
    </location>
</feature>
<feature type="helix" evidence="12">
    <location>
        <begin position="597"/>
        <end position="616"/>
    </location>
</feature>
<feature type="helix" evidence="12">
    <location>
        <begin position="625"/>
        <end position="639"/>
    </location>
</feature>
<feature type="turn" evidence="12">
    <location>
        <begin position="640"/>
        <end position="643"/>
    </location>
</feature>
<feature type="helix" evidence="12">
    <location>
        <begin position="644"/>
        <end position="648"/>
    </location>
</feature>
<feature type="helix" evidence="12">
    <location>
        <begin position="651"/>
        <end position="659"/>
    </location>
</feature>
<feature type="helix" evidence="12">
    <location>
        <begin position="661"/>
        <end position="663"/>
    </location>
</feature>
<feature type="helix" evidence="12">
    <location>
        <begin position="664"/>
        <end position="680"/>
    </location>
</feature>
<feature type="helix" evidence="12">
    <location>
        <begin position="682"/>
        <end position="685"/>
    </location>
</feature>
<feature type="helix" evidence="12">
    <location>
        <begin position="686"/>
        <end position="701"/>
    </location>
</feature>
<feature type="strand" evidence="12">
    <location>
        <begin position="703"/>
        <end position="705"/>
    </location>
</feature>
<feature type="helix" evidence="12">
    <location>
        <begin position="709"/>
        <end position="724"/>
    </location>
</feature>
<feature type="helix" evidence="12">
    <location>
        <begin position="725"/>
        <end position="728"/>
    </location>
</feature>
<feature type="helix" evidence="12">
    <location>
        <begin position="729"/>
        <end position="743"/>
    </location>
</feature>
<feature type="helix" evidence="12">
    <location>
        <begin position="753"/>
        <end position="777"/>
    </location>
</feature>
<feature type="strand" evidence="12">
    <location>
        <begin position="779"/>
        <end position="782"/>
    </location>
</feature>
<feature type="helix" evidence="12">
    <location>
        <begin position="785"/>
        <end position="790"/>
    </location>
</feature>
<feature type="helix" evidence="12">
    <location>
        <begin position="793"/>
        <end position="806"/>
    </location>
</feature>
<feature type="helix" evidence="12">
    <location>
        <begin position="812"/>
        <end position="828"/>
    </location>
</feature>
<feature type="helix" evidence="12">
    <location>
        <begin position="834"/>
        <end position="838"/>
    </location>
</feature>
<feature type="helix" evidence="12">
    <location>
        <begin position="841"/>
        <end position="849"/>
    </location>
</feature>
<feature type="helix" evidence="12">
    <location>
        <begin position="856"/>
        <end position="871"/>
    </location>
</feature>
<feature type="helix" evidence="12">
    <location>
        <begin position="872"/>
        <end position="875"/>
    </location>
</feature>
<accession>P70168</accession>
<accession>Q62117</accession>
<accession>Q6GTI5</accession>
<evidence type="ECO:0000250" key="1"/>
<evidence type="ECO:0000250" key="2">
    <source>
        <dbReference type="UniProtKB" id="Q14974"/>
    </source>
</evidence>
<evidence type="ECO:0000255" key="3">
    <source>
        <dbReference type="PROSITE-ProRule" id="PRU00115"/>
    </source>
</evidence>
<evidence type="ECO:0000269" key="4">
    <source>
    </source>
</evidence>
<evidence type="ECO:0000269" key="5">
    <source>
    </source>
</evidence>
<evidence type="ECO:0000269" key="6">
    <source>
    </source>
</evidence>
<evidence type="ECO:0000269" key="7">
    <source>
    </source>
</evidence>
<evidence type="ECO:0000269" key="8">
    <source>
    </source>
</evidence>
<evidence type="ECO:0000269" key="9">
    <source>
    </source>
</evidence>
<evidence type="ECO:0000305" key="10"/>
<evidence type="ECO:0007829" key="11">
    <source>
        <dbReference type="PDB" id="1GCJ"/>
    </source>
</evidence>
<evidence type="ECO:0007829" key="12">
    <source>
        <dbReference type="PDB" id="1UKL"/>
    </source>
</evidence>
<protein>
    <recommendedName>
        <fullName>Importin subunit beta-1</fullName>
    </recommendedName>
    <alternativeName>
        <fullName>Karyopherin subunit beta-1</fullName>
    </alternativeName>
    <alternativeName>
        <fullName>Nuclear factor p97</fullName>
    </alternativeName>
    <alternativeName>
        <fullName>Pore targeting complex 97 kDa subunit</fullName>
        <shortName>PTAC97</shortName>
    </alternativeName>
    <alternativeName>
        <fullName>SCG</fullName>
    </alternativeName>
</protein>
<name>IMB1_MOUSE</name>